<evidence type="ECO:0000255" key="1">
    <source>
        <dbReference type="HAMAP-Rule" id="MF_01707"/>
    </source>
</evidence>
<evidence type="ECO:0000305" key="2"/>
<evidence type="ECO:0007829" key="3">
    <source>
        <dbReference type="PDB" id="7F02"/>
    </source>
</evidence>
<evidence type="ECO:0007829" key="4">
    <source>
        <dbReference type="PDB" id="7F04"/>
    </source>
</evidence>
<name>CCMA_ECOLI</name>
<sequence>MGMLEARELLCERDERTLFSGLSFTLNAGEWVQITGSNGAGKTTLLRLLTGLSRPDAGEVLWQGQPLHQVRDSYHQNLLWIGHQPGIKTRLTALENLHFYHRDGDTAQCLEALAQAGLAGFEDIPVNQLSAGQQRRVALARLWLTRATLWILDEPFTAIDVNGVDRLTQRMAQHTEQGGIVILTTHQPLNVAESKIRRISLTQTRAA</sequence>
<gene>
    <name evidence="1" type="primary">ccmA</name>
    <name type="synonym">yejW</name>
    <name type="ordered locus">b2201</name>
    <name type="ordered locus">JW5366</name>
</gene>
<keyword id="KW-0002">3D-structure</keyword>
<keyword id="KW-0067">ATP-binding</keyword>
<keyword id="KW-0997">Cell inner membrane</keyword>
<keyword id="KW-1003">Cell membrane</keyword>
<keyword id="KW-0201">Cytochrome c-type biogenesis</keyword>
<keyword id="KW-0472">Membrane</keyword>
<keyword id="KW-0547">Nucleotide-binding</keyword>
<keyword id="KW-1185">Reference proteome</keyword>
<keyword id="KW-1278">Translocase</keyword>
<keyword id="KW-0813">Transport</keyword>
<organism>
    <name type="scientific">Escherichia coli (strain K12)</name>
    <dbReference type="NCBI Taxonomy" id="83333"/>
    <lineage>
        <taxon>Bacteria</taxon>
        <taxon>Pseudomonadati</taxon>
        <taxon>Pseudomonadota</taxon>
        <taxon>Gammaproteobacteria</taxon>
        <taxon>Enterobacterales</taxon>
        <taxon>Enterobacteriaceae</taxon>
        <taxon>Escherichia</taxon>
    </lineage>
</organism>
<proteinExistence type="evidence at protein level"/>
<accession>P33931</accession>
<accession>Q2MAP2</accession>
<reference key="1">
    <citation type="submission" date="1993-10" db="EMBL/GenBank/DDBJ databases">
        <title>Automated multiplex sequencing of the E.coli genome.</title>
        <authorList>
            <person name="Richterich P."/>
            <person name="Lakey N."/>
            <person name="Gryan G."/>
            <person name="Jaehn L."/>
            <person name="Mintz L."/>
            <person name="Robison K."/>
            <person name="Church G.M."/>
        </authorList>
    </citation>
    <scope>NUCLEOTIDE SEQUENCE [LARGE SCALE GENOMIC DNA]</scope>
    <source>
        <strain>K12 / BHB2600</strain>
    </source>
</reference>
<reference key="2">
    <citation type="journal article" date="1997" name="Science">
        <title>The complete genome sequence of Escherichia coli K-12.</title>
        <authorList>
            <person name="Blattner F.R."/>
            <person name="Plunkett G. III"/>
            <person name="Bloch C.A."/>
            <person name="Perna N.T."/>
            <person name="Burland V."/>
            <person name="Riley M."/>
            <person name="Collado-Vides J."/>
            <person name="Glasner J.D."/>
            <person name="Rode C.K."/>
            <person name="Mayhew G.F."/>
            <person name="Gregor J."/>
            <person name="Davis N.W."/>
            <person name="Kirkpatrick H.A."/>
            <person name="Goeden M.A."/>
            <person name="Rose D.J."/>
            <person name="Mau B."/>
            <person name="Shao Y."/>
        </authorList>
    </citation>
    <scope>NUCLEOTIDE SEQUENCE [LARGE SCALE GENOMIC DNA]</scope>
    <source>
        <strain>K12 / MG1655 / ATCC 47076</strain>
    </source>
</reference>
<reference key="3">
    <citation type="journal article" date="2006" name="Mol. Syst. Biol.">
        <title>Highly accurate genome sequences of Escherichia coli K-12 strains MG1655 and W3110.</title>
        <authorList>
            <person name="Hayashi K."/>
            <person name="Morooka N."/>
            <person name="Yamamoto Y."/>
            <person name="Fujita K."/>
            <person name="Isono K."/>
            <person name="Choi S."/>
            <person name="Ohtsubo E."/>
            <person name="Baba T."/>
            <person name="Wanner B.L."/>
            <person name="Mori H."/>
            <person name="Horiuchi T."/>
        </authorList>
    </citation>
    <scope>NUCLEOTIDE SEQUENCE [LARGE SCALE GENOMIC DNA]</scope>
    <source>
        <strain>K12 / W3110 / ATCC 27325 / DSM 5911</strain>
    </source>
</reference>
<reference key="4">
    <citation type="journal article" date="1995" name="J. Bacteriol.">
        <title>Escherichia coli genes required for cytochrome c maturation.</title>
        <authorList>
            <person name="Thoeny-Meyer L."/>
            <person name="Fischer F."/>
            <person name="Kunzler P."/>
            <person name="Ritz D."/>
            <person name="Hennecke H."/>
        </authorList>
    </citation>
    <scope>CHARACTERIZATION</scope>
    <scope>GENE NAME</scope>
</reference>
<reference key="5">
    <citation type="journal article" date="1999" name="Proc. Natl. Acad. Sci. U.S.A.">
        <title>Heme transfer to the heme chaperone CcmE during cytochrome c maturation requires the CcmC protein, which may function independently of the ABC-transporter CcmAB.</title>
        <authorList>
            <person name="Schulz H."/>
            <person name="Fabianek R.A."/>
            <person name="Pellicioli E.C."/>
            <person name="Hennecke H."/>
            <person name="Thony-Meyer L."/>
        </authorList>
    </citation>
    <scope>CHARACTERIZATION</scope>
    <source>
        <strain>K12</strain>
    </source>
</reference>
<reference key="6">
    <citation type="journal article" date="2000" name="Microbiology">
        <title>Oxidase and periplasmic cytochrome assembly in Escherichia coli K-12: CydDC and CcmAB are not required for haem-membrane association.</title>
        <authorList>
            <person name="Cook G.M."/>
            <person name="Poole R.K."/>
        </authorList>
    </citation>
    <scope>CHARACTERIZATION</scope>
    <source>
        <strain>K12</strain>
    </source>
</reference>
<dbReference type="EC" id="7.6.2.5" evidence="1"/>
<dbReference type="EMBL" id="U00008">
    <property type="protein sequence ID" value="AAA16393.1"/>
    <property type="status" value="ALT_INIT"/>
    <property type="molecule type" value="Genomic_DNA"/>
</dbReference>
<dbReference type="EMBL" id="U00096">
    <property type="protein sequence ID" value="AAC75261.2"/>
    <property type="molecule type" value="Genomic_DNA"/>
</dbReference>
<dbReference type="EMBL" id="AP009048">
    <property type="protein sequence ID" value="BAE76664.1"/>
    <property type="molecule type" value="Genomic_DNA"/>
</dbReference>
<dbReference type="PIR" id="G64989">
    <property type="entry name" value="G64989"/>
</dbReference>
<dbReference type="RefSeq" id="NP_416705.2">
    <property type="nucleotide sequence ID" value="NC_000913.3"/>
</dbReference>
<dbReference type="RefSeq" id="WP_000525587.1">
    <property type="nucleotide sequence ID" value="NZ_STEB01000002.1"/>
</dbReference>
<dbReference type="PDB" id="7F02">
    <property type="method" value="EM"/>
    <property type="resolution" value="3.24 A"/>
    <property type="chains" value="A/E=1-207"/>
</dbReference>
<dbReference type="PDB" id="7F03">
    <property type="method" value="EM"/>
    <property type="resolution" value="3.29 A"/>
    <property type="chains" value="A/E=1-207"/>
</dbReference>
<dbReference type="PDB" id="7F04">
    <property type="method" value="EM"/>
    <property type="resolution" value="2.86 A"/>
    <property type="chains" value="A/E=1-207"/>
</dbReference>
<dbReference type="PDB" id="7VFJ">
    <property type="method" value="EM"/>
    <property type="resolution" value="3.98 A"/>
    <property type="chains" value="A/E=1-207"/>
</dbReference>
<dbReference type="PDB" id="7VFP">
    <property type="method" value="EM"/>
    <property type="resolution" value="4.03 A"/>
    <property type="chains" value="A/E=1-202"/>
</dbReference>
<dbReference type="PDB" id="8CE1">
    <property type="method" value="EM"/>
    <property type="resolution" value="3.47 A"/>
    <property type="chains" value="A/a=1-207"/>
</dbReference>
<dbReference type="PDB" id="8CE5">
    <property type="method" value="EM"/>
    <property type="resolution" value="3.62 A"/>
    <property type="chains" value="A/a=1-207"/>
</dbReference>
<dbReference type="PDB" id="8CE8">
    <property type="method" value="EM"/>
    <property type="resolution" value="3.81 A"/>
    <property type="chains" value="A/a=1-207"/>
</dbReference>
<dbReference type="PDB" id="8CEA">
    <property type="method" value="EM"/>
    <property type="resolution" value="3.94 A"/>
    <property type="chains" value="A/a=1-207"/>
</dbReference>
<dbReference type="PDBsum" id="7F02"/>
<dbReference type="PDBsum" id="7F03"/>
<dbReference type="PDBsum" id="7F04"/>
<dbReference type="PDBsum" id="7VFJ"/>
<dbReference type="PDBsum" id="7VFP"/>
<dbReference type="PDBsum" id="8CE1"/>
<dbReference type="PDBsum" id="8CE5"/>
<dbReference type="PDBsum" id="8CE8"/>
<dbReference type="PDBsum" id="8CEA"/>
<dbReference type="EMDB" id="EMD-16597"/>
<dbReference type="EMDB" id="EMD-16599"/>
<dbReference type="EMDB" id="EMD-16601"/>
<dbReference type="EMDB" id="EMD-16602"/>
<dbReference type="EMDB" id="EMD-31394"/>
<dbReference type="EMDB" id="EMD-31395"/>
<dbReference type="EMDB" id="EMD-31396"/>
<dbReference type="EMDB" id="EMD-31956"/>
<dbReference type="EMDB" id="EMD-31957"/>
<dbReference type="SMR" id="P33931"/>
<dbReference type="BioGRID" id="4261550">
    <property type="interactions" value="13"/>
</dbReference>
<dbReference type="BioGRID" id="851055">
    <property type="interactions" value="2"/>
</dbReference>
<dbReference type="ComplexPortal" id="CPX-3568">
    <property type="entry name" value="CcmABCDE system I cytochrome c biogenesis complex"/>
</dbReference>
<dbReference type="FunCoup" id="P33931">
    <property type="interactions" value="417"/>
</dbReference>
<dbReference type="IntAct" id="P33931">
    <property type="interactions" value="5"/>
</dbReference>
<dbReference type="STRING" id="511145.b2201"/>
<dbReference type="jPOST" id="P33931"/>
<dbReference type="PaxDb" id="511145-b2201"/>
<dbReference type="EnsemblBacteria" id="AAC75261">
    <property type="protein sequence ID" value="AAC75261"/>
    <property type="gene ID" value="b2201"/>
</dbReference>
<dbReference type="GeneID" id="75206453"/>
<dbReference type="GeneID" id="946714"/>
<dbReference type="KEGG" id="ecj:JW5366"/>
<dbReference type="KEGG" id="eco:b2201"/>
<dbReference type="PATRIC" id="fig|511145.12.peg.2290"/>
<dbReference type="EchoBASE" id="EB1989"/>
<dbReference type="eggNOG" id="COG4133">
    <property type="taxonomic scope" value="Bacteria"/>
</dbReference>
<dbReference type="HOGENOM" id="CLU_000604_1_2_6"/>
<dbReference type="InParanoid" id="P33931"/>
<dbReference type="OMA" id="NLAWLCA"/>
<dbReference type="PhylomeDB" id="P33931"/>
<dbReference type="BioCyc" id="EcoCyc:CCMA-MONOMER"/>
<dbReference type="BioCyc" id="MetaCyc:CCMA-MONOMER"/>
<dbReference type="PRO" id="PR:P33931"/>
<dbReference type="Proteomes" id="UP000000625">
    <property type="component" value="Chromosome"/>
</dbReference>
<dbReference type="GO" id="GO:0043190">
    <property type="term" value="C:ATP-binding cassette (ABC) transporter complex"/>
    <property type="evidence" value="ECO:0000303"/>
    <property type="project" value="ComplexPortal"/>
</dbReference>
<dbReference type="GO" id="GO:0015439">
    <property type="term" value="F:ABC-type heme transporter activity"/>
    <property type="evidence" value="ECO:0007669"/>
    <property type="project" value="UniProtKB-EC"/>
</dbReference>
<dbReference type="GO" id="GO:0005524">
    <property type="term" value="F:ATP binding"/>
    <property type="evidence" value="ECO:0007669"/>
    <property type="project" value="UniProtKB-KW"/>
</dbReference>
<dbReference type="GO" id="GO:0016887">
    <property type="term" value="F:ATP hydrolysis activity"/>
    <property type="evidence" value="ECO:0000314"/>
    <property type="project" value="EcoCyc"/>
</dbReference>
<dbReference type="GO" id="GO:1903607">
    <property type="term" value="P:cytochrome c biosynthetic process"/>
    <property type="evidence" value="ECO:0000314"/>
    <property type="project" value="EcoCyc"/>
</dbReference>
<dbReference type="GO" id="GO:0017004">
    <property type="term" value="P:cytochrome complex assembly"/>
    <property type="evidence" value="ECO:0000303"/>
    <property type="project" value="ComplexPortal"/>
</dbReference>
<dbReference type="GO" id="GO:1904334">
    <property type="term" value="P:heme import across plasma membrane"/>
    <property type="evidence" value="ECO:0000303"/>
    <property type="project" value="ComplexPortal"/>
</dbReference>
<dbReference type="CDD" id="cd03231">
    <property type="entry name" value="ABC_CcmA_heme_exporter"/>
    <property type="match status" value="1"/>
</dbReference>
<dbReference type="FunFam" id="3.40.50.300:FF:001098">
    <property type="entry name" value="Cytochrome c biogenesis ATP-binding export protein CcmA"/>
    <property type="match status" value="1"/>
</dbReference>
<dbReference type="Gene3D" id="3.40.50.300">
    <property type="entry name" value="P-loop containing nucleotide triphosphate hydrolases"/>
    <property type="match status" value="1"/>
</dbReference>
<dbReference type="InterPro" id="IPR003593">
    <property type="entry name" value="AAA+_ATPase"/>
</dbReference>
<dbReference type="InterPro" id="IPR003439">
    <property type="entry name" value="ABC_transporter-like_ATP-bd"/>
</dbReference>
<dbReference type="InterPro" id="IPR017871">
    <property type="entry name" value="ABC_transporter-like_CS"/>
</dbReference>
<dbReference type="InterPro" id="IPR005895">
    <property type="entry name" value="ABC_transptr_haem_export_CcmA"/>
</dbReference>
<dbReference type="InterPro" id="IPR027417">
    <property type="entry name" value="P-loop_NTPase"/>
</dbReference>
<dbReference type="NCBIfam" id="TIGR01189">
    <property type="entry name" value="ccmA"/>
    <property type="match status" value="1"/>
</dbReference>
<dbReference type="NCBIfam" id="NF010061">
    <property type="entry name" value="PRK13538.1"/>
    <property type="match status" value="1"/>
</dbReference>
<dbReference type="PANTHER" id="PTHR43499">
    <property type="entry name" value="ABC TRANSPORTER I FAMILY MEMBER 1"/>
    <property type="match status" value="1"/>
</dbReference>
<dbReference type="PANTHER" id="PTHR43499:SF1">
    <property type="entry name" value="ABC TRANSPORTER I FAMILY MEMBER 1"/>
    <property type="match status" value="1"/>
</dbReference>
<dbReference type="Pfam" id="PF00005">
    <property type="entry name" value="ABC_tran"/>
    <property type="match status" value="1"/>
</dbReference>
<dbReference type="SMART" id="SM00382">
    <property type="entry name" value="AAA"/>
    <property type="match status" value="1"/>
</dbReference>
<dbReference type="SUPFAM" id="SSF52540">
    <property type="entry name" value="P-loop containing nucleoside triphosphate hydrolases"/>
    <property type="match status" value="1"/>
</dbReference>
<dbReference type="PROSITE" id="PS00211">
    <property type="entry name" value="ABC_TRANSPORTER_1"/>
    <property type="match status" value="1"/>
</dbReference>
<dbReference type="PROSITE" id="PS50893">
    <property type="entry name" value="ABC_TRANSPORTER_2"/>
    <property type="match status" value="1"/>
</dbReference>
<dbReference type="PROSITE" id="PS51243">
    <property type="entry name" value="CCMA"/>
    <property type="match status" value="1"/>
</dbReference>
<protein>
    <recommendedName>
        <fullName evidence="1">Cytochrome c biogenesis ATP-binding export protein CcmA</fullName>
        <ecNumber evidence="1">7.6.2.5</ecNumber>
    </recommendedName>
    <alternativeName>
        <fullName evidence="1">Heme exporter protein A</fullName>
    </alternativeName>
</protein>
<comment type="function">
    <text>Part of the ABC transporter complex CcmAB involved in the biogenesis of c-type cytochromes; once thought to export heme, this seems not to be the case, but its exact role is uncertain. Responsible for energy coupling to the transport system.</text>
</comment>
<comment type="catalytic activity">
    <reaction evidence="1">
        <text>heme b(in) + ATP + H2O = heme b(out) + ADP + phosphate + H(+)</text>
        <dbReference type="Rhea" id="RHEA:19261"/>
        <dbReference type="ChEBI" id="CHEBI:15377"/>
        <dbReference type="ChEBI" id="CHEBI:15378"/>
        <dbReference type="ChEBI" id="CHEBI:30616"/>
        <dbReference type="ChEBI" id="CHEBI:43474"/>
        <dbReference type="ChEBI" id="CHEBI:60344"/>
        <dbReference type="ChEBI" id="CHEBI:456216"/>
        <dbReference type="EC" id="7.6.2.5"/>
    </reaction>
</comment>
<comment type="subunit">
    <text evidence="1">The complex is composed of two ATP-binding proteins (CcmA) and two transmembrane proteins (CcmB).</text>
</comment>
<comment type="interaction">
    <interactant intactId="EBI-6402796">
        <id>P33931</id>
    </interactant>
    <interactant intactId="EBI-546936">
        <id>P0ABL8</id>
        <label>ccmB</label>
    </interactant>
    <organismsDiffer>false</organismsDiffer>
    <experiments>2</experiments>
</comment>
<comment type="interaction">
    <interactant intactId="EBI-6402796">
        <id>P33931</id>
    </interactant>
    <interactant intactId="EBI-2123469">
        <id>P0ABM1</id>
        <label>ccmC</label>
    </interactant>
    <organismsDiffer>false</organismsDiffer>
    <experiments>4</experiments>
</comment>
<comment type="subcellular location">
    <subcellularLocation>
        <location evidence="1">Cell inner membrane</location>
        <topology evidence="1">Peripheral membrane protein</topology>
    </subcellularLocation>
</comment>
<comment type="similarity">
    <text evidence="1">Belongs to the ABC transporter superfamily. CcmA exporter (TC 3.A.1.107) family.</text>
</comment>
<comment type="sequence caution" evidence="2">
    <conflict type="erroneous initiation">
        <sequence resource="EMBL-CDS" id="AAA16393"/>
    </conflict>
    <text>Truncated N-terminus.</text>
</comment>
<feature type="chain" id="PRO_0000092177" description="Cytochrome c biogenesis ATP-binding export protein CcmA">
    <location>
        <begin position="1"/>
        <end position="207"/>
    </location>
</feature>
<feature type="domain" description="ABC transporter" evidence="1">
    <location>
        <begin position="4"/>
        <end position="207"/>
    </location>
</feature>
<feature type="binding site" evidence="1">
    <location>
        <begin position="36"/>
        <end position="43"/>
    </location>
    <ligand>
        <name>ATP</name>
        <dbReference type="ChEBI" id="CHEBI:30616"/>
    </ligand>
</feature>
<feature type="strand" evidence="4">
    <location>
        <begin position="3"/>
        <end position="13"/>
    </location>
</feature>
<feature type="strand" evidence="4">
    <location>
        <begin position="16"/>
        <end position="22"/>
    </location>
</feature>
<feature type="strand" evidence="4">
    <location>
        <begin position="28"/>
        <end position="34"/>
    </location>
</feature>
<feature type="helix" evidence="4">
    <location>
        <begin position="42"/>
        <end position="49"/>
    </location>
</feature>
<feature type="strand" evidence="3">
    <location>
        <begin position="50"/>
        <end position="53"/>
    </location>
</feature>
<feature type="strand" evidence="4">
    <location>
        <begin position="56"/>
        <end position="62"/>
    </location>
</feature>
<feature type="helix" evidence="4">
    <location>
        <begin position="67"/>
        <end position="70"/>
    </location>
</feature>
<feature type="helix" evidence="4">
    <location>
        <begin position="73"/>
        <end position="76"/>
    </location>
</feature>
<feature type="strand" evidence="4">
    <location>
        <begin position="79"/>
        <end position="81"/>
    </location>
</feature>
<feature type="strand" evidence="4">
    <location>
        <begin position="89"/>
        <end position="92"/>
    </location>
</feature>
<feature type="helix" evidence="4">
    <location>
        <begin position="93"/>
        <end position="100"/>
    </location>
</feature>
<feature type="strand" evidence="4">
    <location>
        <begin position="101"/>
        <end position="103"/>
    </location>
</feature>
<feature type="strand" evidence="4">
    <location>
        <begin position="106"/>
        <end position="108"/>
    </location>
</feature>
<feature type="helix" evidence="4">
    <location>
        <begin position="109"/>
        <end position="115"/>
    </location>
</feature>
<feature type="strand" evidence="4">
    <location>
        <begin position="122"/>
        <end position="125"/>
    </location>
</feature>
<feature type="helix" evidence="4">
    <location>
        <begin position="126"/>
        <end position="128"/>
    </location>
</feature>
<feature type="helix" evidence="4">
    <location>
        <begin position="133"/>
        <end position="139"/>
    </location>
</feature>
<feature type="helix" evidence="4">
    <location>
        <begin position="140"/>
        <end position="143"/>
    </location>
</feature>
<feature type="strand" evidence="4">
    <location>
        <begin position="148"/>
        <end position="153"/>
    </location>
</feature>
<feature type="helix" evidence="4">
    <location>
        <begin position="161"/>
        <end position="177"/>
    </location>
</feature>
<feature type="strand" evidence="4">
    <location>
        <begin position="180"/>
        <end position="184"/>
    </location>
</feature>
<feature type="helix" evidence="4">
    <location>
        <begin position="193"/>
        <end position="195"/>
    </location>
</feature>
<feature type="strand" evidence="4">
    <location>
        <begin position="197"/>
        <end position="199"/>
    </location>
</feature>